<evidence type="ECO:0000255" key="1">
    <source>
        <dbReference type="HAMAP-Rule" id="MF_01200"/>
    </source>
</evidence>
<sequence>MKPSERICAALDFPTFAAAEPFARAVAPEVGLLKVGLELFAAEGPAAVRGAARLGRPVFLDLKLHDIPNTVEGAARSAAASGAALLTVHAAGGAEMVRAAVRGAGPGVRVLAVTVLTSLDAAALDAVGLAGPPEAAVVRLARLAVVAGAGGIVCSPHEVAAVRAAVGPGPLLVVPGVRPAGAAKGDQARVATPAEAVRAGADVIVVGRPLRDAPDPAAAARAIAAGL</sequence>
<accession>B8J9L8</accession>
<dbReference type="EC" id="4.1.1.23" evidence="1"/>
<dbReference type="EMBL" id="CP001359">
    <property type="protein sequence ID" value="ACL67406.1"/>
    <property type="molecule type" value="Genomic_DNA"/>
</dbReference>
<dbReference type="RefSeq" id="WP_015935128.1">
    <property type="nucleotide sequence ID" value="NC_011891.1"/>
</dbReference>
<dbReference type="SMR" id="B8J9L8"/>
<dbReference type="KEGG" id="acp:A2cp1_4088"/>
<dbReference type="HOGENOM" id="CLU_067069_1_0_7"/>
<dbReference type="UniPathway" id="UPA00070">
    <property type="reaction ID" value="UER00120"/>
</dbReference>
<dbReference type="Proteomes" id="UP000007089">
    <property type="component" value="Chromosome"/>
</dbReference>
<dbReference type="GO" id="GO:0005829">
    <property type="term" value="C:cytosol"/>
    <property type="evidence" value="ECO:0007669"/>
    <property type="project" value="TreeGrafter"/>
</dbReference>
<dbReference type="GO" id="GO:0004590">
    <property type="term" value="F:orotidine-5'-phosphate decarboxylase activity"/>
    <property type="evidence" value="ECO:0007669"/>
    <property type="project" value="UniProtKB-UniRule"/>
</dbReference>
<dbReference type="GO" id="GO:0006207">
    <property type="term" value="P:'de novo' pyrimidine nucleobase biosynthetic process"/>
    <property type="evidence" value="ECO:0007669"/>
    <property type="project" value="InterPro"/>
</dbReference>
<dbReference type="GO" id="GO:0044205">
    <property type="term" value="P:'de novo' UMP biosynthetic process"/>
    <property type="evidence" value="ECO:0007669"/>
    <property type="project" value="UniProtKB-UniRule"/>
</dbReference>
<dbReference type="CDD" id="cd04725">
    <property type="entry name" value="OMP_decarboxylase_like"/>
    <property type="match status" value="1"/>
</dbReference>
<dbReference type="Gene3D" id="3.20.20.70">
    <property type="entry name" value="Aldolase class I"/>
    <property type="match status" value="1"/>
</dbReference>
<dbReference type="HAMAP" id="MF_01200_B">
    <property type="entry name" value="OMPdecase_type1_B"/>
    <property type="match status" value="1"/>
</dbReference>
<dbReference type="InterPro" id="IPR013785">
    <property type="entry name" value="Aldolase_TIM"/>
</dbReference>
<dbReference type="InterPro" id="IPR014732">
    <property type="entry name" value="OMPdecase"/>
</dbReference>
<dbReference type="InterPro" id="IPR018089">
    <property type="entry name" value="OMPdecase_AS"/>
</dbReference>
<dbReference type="InterPro" id="IPR047596">
    <property type="entry name" value="OMPdecase_bac"/>
</dbReference>
<dbReference type="InterPro" id="IPR001754">
    <property type="entry name" value="OMPdeCOase_dom"/>
</dbReference>
<dbReference type="InterPro" id="IPR011060">
    <property type="entry name" value="RibuloseP-bd_barrel"/>
</dbReference>
<dbReference type="NCBIfam" id="NF001273">
    <property type="entry name" value="PRK00230.1"/>
    <property type="match status" value="1"/>
</dbReference>
<dbReference type="NCBIfam" id="TIGR01740">
    <property type="entry name" value="pyrF"/>
    <property type="match status" value="1"/>
</dbReference>
<dbReference type="PANTHER" id="PTHR32119">
    <property type="entry name" value="OROTIDINE 5'-PHOSPHATE DECARBOXYLASE"/>
    <property type="match status" value="1"/>
</dbReference>
<dbReference type="PANTHER" id="PTHR32119:SF2">
    <property type="entry name" value="OROTIDINE 5'-PHOSPHATE DECARBOXYLASE"/>
    <property type="match status" value="1"/>
</dbReference>
<dbReference type="Pfam" id="PF00215">
    <property type="entry name" value="OMPdecase"/>
    <property type="match status" value="1"/>
</dbReference>
<dbReference type="SMART" id="SM00934">
    <property type="entry name" value="OMPdecase"/>
    <property type="match status" value="1"/>
</dbReference>
<dbReference type="SUPFAM" id="SSF51366">
    <property type="entry name" value="Ribulose-phoshate binding barrel"/>
    <property type="match status" value="1"/>
</dbReference>
<dbReference type="PROSITE" id="PS00156">
    <property type="entry name" value="OMPDECASE"/>
    <property type="match status" value="1"/>
</dbReference>
<keyword id="KW-0210">Decarboxylase</keyword>
<keyword id="KW-0456">Lyase</keyword>
<keyword id="KW-0665">Pyrimidine biosynthesis</keyword>
<protein>
    <recommendedName>
        <fullName evidence="1">Orotidine 5'-phosphate decarboxylase</fullName>
        <ecNumber evidence="1">4.1.1.23</ecNumber>
    </recommendedName>
    <alternativeName>
        <fullName evidence="1">OMP decarboxylase</fullName>
        <shortName evidence="1">OMPDCase</shortName>
        <shortName evidence="1">OMPdecase</shortName>
    </alternativeName>
</protein>
<name>PYRF_ANAD2</name>
<organism>
    <name type="scientific">Anaeromyxobacter dehalogenans (strain 2CP-1 / ATCC BAA-258)</name>
    <dbReference type="NCBI Taxonomy" id="455488"/>
    <lineage>
        <taxon>Bacteria</taxon>
        <taxon>Pseudomonadati</taxon>
        <taxon>Myxococcota</taxon>
        <taxon>Myxococcia</taxon>
        <taxon>Myxococcales</taxon>
        <taxon>Cystobacterineae</taxon>
        <taxon>Anaeromyxobacteraceae</taxon>
        <taxon>Anaeromyxobacter</taxon>
    </lineage>
</organism>
<gene>
    <name evidence="1" type="primary">pyrF</name>
    <name type="ordered locus">A2cp1_4088</name>
</gene>
<proteinExistence type="inferred from homology"/>
<reference key="1">
    <citation type="submission" date="2009-01" db="EMBL/GenBank/DDBJ databases">
        <title>Complete sequence of Anaeromyxobacter dehalogenans 2CP-1.</title>
        <authorList>
            <person name="Lucas S."/>
            <person name="Copeland A."/>
            <person name="Lapidus A."/>
            <person name="Glavina del Rio T."/>
            <person name="Dalin E."/>
            <person name="Tice H."/>
            <person name="Bruce D."/>
            <person name="Goodwin L."/>
            <person name="Pitluck S."/>
            <person name="Saunders E."/>
            <person name="Brettin T."/>
            <person name="Detter J.C."/>
            <person name="Han C."/>
            <person name="Larimer F."/>
            <person name="Land M."/>
            <person name="Hauser L."/>
            <person name="Kyrpides N."/>
            <person name="Ovchinnikova G."/>
            <person name="Beliaev A.S."/>
            <person name="Richardson P."/>
        </authorList>
    </citation>
    <scope>NUCLEOTIDE SEQUENCE [LARGE SCALE GENOMIC DNA]</scope>
    <source>
        <strain>2CP-1 / ATCC BAA-258</strain>
    </source>
</reference>
<comment type="function">
    <text evidence="1">Catalyzes the decarboxylation of orotidine 5'-monophosphate (OMP) to uridine 5'-monophosphate (UMP).</text>
</comment>
<comment type="catalytic activity">
    <reaction evidence="1">
        <text>orotidine 5'-phosphate + H(+) = UMP + CO2</text>
        <dbReference type="Rhea" id="RHEA:11596"/>
        <dbReference type="ChEBI" id="CHEBI:15378"/>
        <dbReference type="ChEBI" id="CHEBI:16526"/>
        <dbReference type="ChEBI" id="CHEBI:57538"/>
        <dbReference type="ChEBI" id="CHEBI:57865"/>
        <dbReference type="EC" id="4.1.1.23"/>
    </reaction>
</comment>
<comment type="pathway">
    <text evidence="1">Pyrimidine metabolism; UMP biosynthesis via de novo pathway; UMP from orotate: step 2/2.</text>
</comment>
<comment type="subunit">
    <text evidence="1">Homodimer.</text>
</comment>
<comment type="similarity">
    <text evidence="1">Belongs to the OMP decarboxylase family. Type 1 subfamily.</text>
</comment>
<feature type="chain" id="PRO_1000164556" description="Orotidine 5'-phosphate decarboxylase">
    <location>
        <begin position="1"/>
        <end position="227"/>
    </location>
</feature>
<feature type="active site" description="Proton donor" evidence="1">
    <location>
        <position position="63"/>
    </location>
</feature>
<feature type="binding site" evidence="1">
    <location>
        <position position="12"/>
    </location>
    <ligand>
        <name>substrate</name>
    </ligand>
</feature>
<feature type="binding site" evidence="1">
    <location>
        <position position="34"/>
    </location>
    <ligand>
        <name>substrate</name>
    </ligand>
</feature>
<feature type="binding site" evidence="1">
    <location>
        <begin position="61"/>
        <end position="70"/>
    </location>
    <ligand>
        <name>substrate</name>
    </ligand>
</feature>
<feature type="binding site" evidence="1">
    <location>
        <position position="117"/>
    </location>
    <ligand>
        <name>substrate</name>
    </ligand>
</feature>
<feature type="binding site" evidence="1">
    <location>
        <position position="178"/>
    </location>
    <ligand>
        <name>substrate</name>
    </ligand>
</feature>
<feature type="binding site" evidence="1">
    <location>
        <position position="187"/>
    </location>
    <ligand>
        <name>substrate</name>
    </ligand>
</feature>
<feature type="binding site" evidence="1">
    <location>
        <position position="207"/>
    </location>
    <ligand>
        <name>substrate</name>
    </ligand>
</feature>
<feature type="binding site" evidence="1">
    <location>
        <position position="208"/>
    </location>
    <ligand>
        <name>substrate</name>
    </ligand>
</feature>